<organism>
    <name type="scientific">Candida albicans (strain SC5314 / ATCC MYA-2876)</name>
    <name type="common">Yeast</name>
    <dbReference type="NCBI Taxonomy" id="237561"/>
    <lineage>
        <taxon>Eukaryota</taxon>
        <taxon>Fungi</taxon>
        <taxon>Dikarya</taxon>
        <taxon>Ascomycota</taxon>
        <taxon>Saccharomycotina</taxon>
        <taxon>Pichiomycetes</taxon>
        <taxon>Debaryomycetaceae</taxon>
        <taxon>Candida/Lodderomyces clade</taxon>
        <taxon>Candida</taxon>
    </lineage>
</organism>
<name>PFS2_CANAL</name>
<protein>
    <recommendedName>
        <fullName>Polyadenylation factor subunit 2</fullName>
    </recommendedName>
</protein>
<feature type="chain" id="PRO_0000238498" description="Polyadenylation factor subunit 2">
    <location>
        <begin position="1"/>
        <end position="543"/>
    </location>
</feature>
<feature type="repeat" description="WD 1">
    <location>
        <begin position="133"/>
        <end position="172"/>
    </location>
</feature>
<feature type="repeat" description="WD 2">
    <location>
        <begin position="175"/>
        <end position="215"/>
    </location>
</feature>
<feature type="repeat" description="WD 3">
    <location>
        <begin position="216"/>
        <end position="255"/>
    </location>
</feature>
<feature type="repeat" description="WD 4">
    <location>
        <begin position="258"/>
        <end position="297"/>
    </location>
</feature>
<feature type="repeat" description="WD 5">
    <location>
        <begin position="300"/>
        <end position="341"/>
    </location>
</feature>
<feature type="repeat" description="WD 6">
    <location>
        <begin position="344"/>
        <end position="384"/>
    </location>
</feature>
<feature type="repeat" description="WD 7">
    <location>
        <begin position="414"/>
        <end position="453"/>
    </location>
</feature>
<feature type="region of interest" description="Disordered" evidence="2">
    <location>
        <begin position="1"/>
        <end position="31"/>
    </location>
</feature>
<feature type="region of interest" description="Disordered" evidence="2">
    <location>
        <begin position="486"/>
        <end position="543"/>
    </location>
</feature>
<feature type="compositionally biased region" description="Low complexity" evidence="2">
    <location>
        <begin position="1"/>
        <end position="12"/>
    </location>
</feature>
<evidence type="ECO:0000250" key="1"/>
<evidence type="ECO:0000256" key="2">
    <source>
        <dbReference type="SAM" id="MobiDB-lite"/>
    </source>
</evidence>
<accession>Q59WJ4</accession>
<accession>A0A1D8PF28</accession>
<gene>
    <name type="primary">PFS2</name>
    <name type="ordered locus">CAALFM_C111090CA</name>
    <name type="ORF">CaO19.2307</name>
    <name type="ORF">CaO19.9843</name>
</gene>
<comment type="function">
    <text evidence="1">Required for 3'-end cleavage and polyadenylation of pre-mRNAs. Also involved in chromosome segregation where it has a role in chromosome attachment to the mitotic spindle (By similarity).</text>
</comment>
<comment type="subcellular location">
    <subcellularLocation>
        <location evidence="1">Nucleus</location>
    </subcellularLocation>
</comment>
<reference key="1">
    <citation type="journal article" date="2004" name="Proc. Natl. Acad. Sci. U.S.A.">
        <title>The diploid genome sequence of Candida albicans.</title>
        <authorList>
            <person name="Jones T."/>
            <person name="Federspiel N.A."/>
            <person name="Chibana H."/>
            <person name="Dungan J."/>
            <person name="Kalman S."/>
            <person name="Magee B.B."/>
            <person name="Newport G."/>
            <person name="Thorstenson Y.R."/>
            <person name="Agabian N."/>
            <person name="Magee P.T."/>
            <person name="Davis R.W."/>
            <person name="Scherer S."/>
        </authorList>
    </citation>
    <scope>NUCLEOTIDE SEQUENCE [LARGE SCALE GENOMIC DNA]</scope>
    <source>
        <strain>SC5314 / ATCC MYA-2876</strain>
    </source>
</reference>
<reference key="2">
    <citation type="journal article" date="2007" name="Genome Biol.">
        <title>Assembly of the Candida albicans genome into sixteen supercontigs aligned on the eight chromosomes.</title>
        <authorList>
            <person name="van het Hoog M."/>
            <person name="Rast T.J."/>
            <person name="Martchenko M."/>
            <person name="Grindle S."/>
            <person name="Dignard D."/>
            <person name="Hogues H."/>
            <person name="Cuomo C."/>
            <person name="Berriman M."/>
            <person name="Scherer S."/>
            <person name="Magee B.B."/>
            <person name="Whiteway M."/>
            <person name="Chibana H."/>
            <person name="Nantel A."/>
            <person name="Magee P.T."/>
        </authorList>
    </citation>
    <scope>GENOME REANNOTATION</scope>
    <source>
        <strain>SC5314 / ATCC MYA-2876</strain>
    </source>
</reference>
<reference key="3">
    <citation type="journal article" date="2013" name="Genome Biol.">
        <title>Assembly of a phased diploid Candida albicans genome facilitates allele-specific measurements and provides a simple model for repeat and indel structure.</title>
        <authorList>
            <person name="Muzzey D."/>
            <person name="Schwartz K."/>
            <person name="Weissman J.S."/>
            <person name="Sherlock G."/>
        </authorList>
    </citation>
    <scope>NUCLEOTIDE SEQUENCE [LARGE SCALE GENOMIC DNA]</scope>
    <scope>GENOME REANNOTATION</scope>
    <source>
        <strain>SC5314 / ATCC MYA-2876</strain>
    </source>
</reference>
<sequence>MYRSHNNNNNYHSRNDGSNGRINKPRDPKSQDKYVAYQQNIEQQLASQEKKQAYRRITDHGNNMGRWYIEKSLGLTNRSQQAIGTIRPESSYLIDLLPSLAYSSSFNLNRRNNKNNLAVLDLQTKFVHLSSNKVKHTINTVKWTPEGRRLLVASHSGEFTLWNGMTFNFETIMQAHESPILTMKYSNHDEWLLSGDQNGTVKYWQPNFNNVNNISAHANGVRDIAFSPNDSKFLTCGDDSAIKIWNFNNGKEERTLSGHHWEVKSADWHPNLGLIVSGSKDNLVKLWDPRSANCVSTLHGFKHTVNKTRFQPNGTARLLASVSRDRSCRIFDLRTMKDMLVIRDSETDLSCVAWHPIHASMVTTAAYNGSISNFLLDSYIPDSNESVPKRSNNNSNLSTNTNNTIDAVQKIPYAHEKAIHAVEYHPLGHLLCTAGSDKTARFWSRARPNDPMAWKDAVYTDCKAGAWYYSVNNNVNAVMEDPNAVKNEDDEIANNDDPLSNSGRRRGVGASASGGATGSVPGLRSRNETPNNGSYAIPGLRGF</sequence>
<keyword id="KW-0159">Chromosome partition</keyword>
<keyword id="KW-0507">mRNA processing</keyword>
<keyword id="KW-0539">Nucleus</keyword>
<keyword id="KW-1185">Reference proteome</keyword>
<keyword id="KW-0677">Repeat</keyword>
<keyword id="KW-0853">WD repeat</keyword>
<dbReference type="EMBL" id="CP017623">
    <property type="protein sequence ID" value="AOW26735.1"/>
    <property type="molecule type" value="Genomic_DNA"/>
</dbReference>
<dbReference type="RefSeq" id="XP_713912.2">
    <property type="nucleotide sequence ID" value="XM_708819.2"/>
</dbReference>
<dbReference type="SMR" id="Q59WJ4"/>
<dbReference type="FunCoup" id="Q59WJ4">
    <property type="interactions" value="254"/>
</dbReference>
<dbReference type="STRING" id="237561.Q59WJ4"/>
<dbReference type="EnsemblFungi" id="C1_11090C_A-T">
    <property type="protein sequence ID" value="C1_11090C_A-T-p1"/>
    <property type="gene ID" value="C1_11090C_A"/>
</dbReference>
<dbReference type="GeneID" id="3644415"/>
<dbReference type="KEGG" id="cal:CAALFM_C111090CA"/>
<dbReference type="CGD" id="CAL0000196733">
    <property type="gene designation" value="orf19.9843"/>
</dbReference>
<dbReference type="VEuPathDB" id="FungiDB:C1_11090C_A"/>
<dbReference type="eggNOG" id="KOG0284">
    <property type="taxonomic scope" value="Eukaryota"/>
</dbReference>
<dbReference type="HOGENOM" id="CLU_000288_77_1_1"/>
<dbReference type="InParanoid" id="Q59WJ4"/>
<dbReference type="OrthoDB" id="16717at2759"/>
<dbReference type="PRO" id="PR:Q59WJ4"/>
<dbReference type="Proteomes" id="UP000000559">
    <property type="component" value="Chromosome 1"/>
</dbReference>
<dbReference type="GO" id="GO:0000785">
    <property type="term" value="C:chromatin"/>
    <property type="evidence" value="ECO:0007669"/>
    <property type="project" value="EnsemblFungi"/>
</dbReference>
<dbReference type="GO" id="GO:0005847">
    <property type="term" value="C:mRNA cleavage and polyadenylation specificity factor complex"/>
    <property type="evidence" value="ECO:0000318"/>
    <property type="project" value="GO_Central"/>
</dbReference>
<dbReference type="GO" id="GO:0007059">
    <property type="term" value="P:chromosome segregation"/>
    <property type="evidence" value="ECO:0007669"/>
    <property type="project" value="UniProtKB-KW"/>
</dbReference>
<dbReference type="GO" id="GO:0180010">
    <property type="term" value="P:co-transcriptional mRNA 3'-end processing, cleavage and polyadenylation pathway"/>
    <property type="evidence" value="ECO:0007669"/>
    <property type="project" value="EnsemblFungi"/>
</dbReference>
<dbReference type="CDD" id="cd00200">
    <property type="entry name" value="WD40"/>
    <property type="match status" value="1"/>
</dbReference>
<dbReference type="FunFam" id="2.130.10.10:FF:000069">
    <property type="entry name" value="WD repeat domain 33"/>
    <property type="match status" value="1"/>
</dbReference>
<dbReference type="Gene3D" id="2.130.10.10">
    <property type="entry name" value="YVTN repeat-like/Quinoprotein amine dehydrogenase"/>
    <property type="match status" value="3"/>
</dbReference>
<dbReference type="InterPro" id="IPR045245">
    <property type="entry name" value="Pfs2-like"/>
</dbReference>
<dbReference type="InterPro" id="IPR015943">
    <property type="entry name" value="WD40/YVTN_repeat-like_dom_sf"/>
</dbReference>
<dbReference type="InterPro" id="IPR036322">
    <property type="entry name" value="WD40_repeat_dom_sf"/>
</dbReference>
<dbReference type="InterPro" id="IPR001680">
    <property type="entry name" value="WD40_rpt"/>
</dbReference>
<dbReference type="PANTHER" id="PTHR22836:SF0">
    <property type="entry name" value="PRE-MRNA 3' END PROCESSING PROTEIN WDR33"/>
    <property type="match status" value="1"/>
</dbReference>
<dbReference type="PANTHER" id="PTHR22836">
    <property type="entry name" value="WD40 REPEAT PROTEIN"/>
    <property type="match status" value="1"/>
</dbReference>
<dbReference type="Pfam" id="PF00400">
    <property type="entry name" value="WD40"/>
    <property type="match status" value="5"/>
</dbReference>
<dbReference type="SMART" id="SM00320">
    <property type="entry name" value="WD40"/>
    <property type="match status" value="7"/>
</dbReference>
<dbReference type="SUPFAM" id="SSF50978">
    <property type="entry name" value="WD40 repeat-like"/>
    <property type="match status" value="1"/>
</dbReference>
<dbReference type="PROSITE" id="PS50082">
    <property type="entry name" value="WD_REPEATS_2"/>
    <property type="match status" value="4"/>
</dbReference>
<dbReference type="PROSITE" id="PS50294">
    <property type="entry name" value="WD_REPEATS_REGION"/>
    <property type="match status" value="1"/>
</dbReference>
<proteinExistence type="inferred from homology"/>